<protein>
    <recommendedName>
        <fullName evidence="3">Dermaseptin-PH</fullName>
        <shortName evidence="5">DRS-PH</shortName>
    </recommendedName>
</protein>
<evidence type="ECO:0000255" key="1"/>
<evidence type="ECO:0000269" key="2">
    <source>
    </source>
</evidence>
<evidence type="ECO:0000303" key="3">
    <source>
    </source>
</evidence>
<evidence type="ECO:0000305" key="4"/>
<evidence type="ECO:0000305" key="5">
    <source>
    </source>
</evidence>
<evidence type="ECO:0000312" key="6">
    <source>
        <dbReference type="EMBL" id="AWK58821.1"/>
    </source>
</evidence>
<reference key="1">
    <citation type="journal article" date="2019" name="Biomolecules">
        <title>A novel dermaseptin isolated from the skin secretion of phyllomedusa tarsius and its cationicity-enhanced analogue exhibiting effective antimicrobial and anti-proliferative activities.</title>
        <authorList>
            <person name="Li M."/>
            <person name="Xi X."/>
            <person name="Ma C."/>
            <person name="Chen X."/>
            <person name="Zhou M."/>
            <person name="Burrows J.F."/>
            <person name="Chen T."/>
            <person name="Wang L."/>
        </authorList>
    </citation>
    <scope>NUCLEOTIDE SEQUENCE [MRNA]</scope>
    <scope>PROTEIN SEQUENCE OF 45-67</scope>
    <scope>FUNCTION</scope>
    <scope>SYNTHESIS OF 45-67</scope>
    <scope>SUBCELLULAR LOCATION</scope>
    <scope>AMIDATION AT GLN-67</scope>
    <source>
        <tissue>Skin secretion</tissue>
    </source>
</reference>
<name>DRSPH_PITHY</name>
<proteinExistence type="evidence at protein level"/>
<feature type="signal peptide" evidence="1">
    <location>
        <begin position="1"/>
        <end position="22"/>
    </location>
</feature>
<feature type="propeptide" id="PRO_0000449597" evidence="2">
    <location>
        <begin position="23"/>
        <end position="44"/>
    </location>
</feature>
<feature type="peptide" id="PRO_5016037295" description="Dermaseptin-PH" evidence="2">
    <location>
        <begin position="45"/>
        <end position="67"/>
    </location>
</feature>
<feature type="propeptide" id="PRO_0000449598" evidence="2">
    <location>
        <begin position="68"/>
        <end position="70"/>
    </location>
</feature>
<feature type="modified residue" description="Glutamine amide" evidence="2">
    <location>
        <position position="67"/>
    </location>
</feature>
<keyword id="KW-0027">Amidation</keyword>
<keyword id="KW-0878">Amphibian defense peptide</keyword>
<keyword id="KW-0044">Antibiotic</keyword>
<keyword id="KW-0929">Antimicrobial</keyword>
<keyword id="KW-0903">Direct protein sequencing</keyword>
<keyword id="KW-0295">Fungicide</keyword>
<keyword id="KW-0391">Immunity</keyword>
<keyword id="KW-0399">Innate immunity</keyword>
<keyword id="KW-0472">Membrane</keyword>
<keyword id="KW-0964">Secreted</keyword>
<keyword id="KW-0732">Signal</keyword>
<keyword id="KW-1052">Target cell membrane</keyword>
<keyword id="KW-1053">Target membrane</keyword>
<gene>
    <name evidence="6" type="primary">DMP-PH</name>
</gene>
<accession>A0A2U8JCR5</accession>
<dbReference type="EMBL" id="MF805718">
    <property type="protein sequence ID" value="AWK58821.1"/>
    <property type="molecule type" value="mRNA"/>
</dbReference>
<dbReference type="GO" id="GO:0005576">
    <property type="term" value="C:extracellular region"/>
    <property type="evidence" value="ECO:0007669"/>
    <property type="project" value="UniProtKB-SubCell"/>
</dbReference>
<dbReference type="GO" id="GO:0016020">
    <property type="term" value="C:membrane"/>
    <property type="evidence" value="ECO:0007669"/>
    <property type="project" value="UniProtKB-KW"/>
</dbReference>
<dbReference type="GO" id="GO:0044218">
    <property type="term" value="C:other organism cell membrane"/>
    <property type="evidence" value="ECO:0007669"/>
    <property type="project" value="UniProtKB-KW"/>
</dbReference>
<dbReference type="GO" id="GO:0042742">
    <property type="term" value="P:defense response to bacterium"/>
    <property type="evidence" value="ECO:0007669"/>
    <property type="project" value="UniProtKB-KW"/>
</dbReference>
<dbReference type="GO" id="GO:0050832">
    <property type="term" value="P:defense response to fungus"/>
    <property type="evidence" value="ECO:0007669"/>
    <property type="project" value="UniProtKB-KW"/>
</dbReference>
<dbReference type="GO" id="GO:0045087">
    <property type="term" value="P:innate immune response"/>
    <property type="evidence" value="ECO:0007669"/>
    <property type="project" value="UniProtKB-KW"/>
</dbReference>
<dbReference type="GO" id="GO:0031640">
    <property type="term" value="P:killing of cells of another organism"/>
    <property type="evidence" value="ECO:0007669"/>
    <property type="project" value="UniProtKB-KW"/>
</dbReference>
<dbReference type="InterPro" id="IPR004275">
    <property type="entry name" value="Frog_antimicrobial_propeptide"/>
</dbReference>
<dbReference type="InterPro" id="IPR016322">
    <property type="entry name" value="FSAP"/>
</dbReference>
<dbReference type="Pfam" id="PF03032">
    <property type="entry name" value="FSAP_sig_propep"/>
    <property type="match status" value="1"/>
</dbReference>
<dbReference type="PIRSF" id="PIRSF001822">
    <property type="entry name" value="Dermaseptin_precursor"/>
    <property type="match status" value="1"/>
</dbReference>
<organism>
    <name type="scientific">Pithecopus hypochondrialis</name>
    <name type="common">Orange-legged leaf frog</name>
    <name type="synonym">Phyllomedusa hypochondrialis</name>
    <dbReference type="NCBI Taxonomy" id="317381"/>
    <lineage>
        <taxon>Eukaryota</taxon>
        <taxon>Metazoa</taxon>
        <taxon>Chordata</taxon>
        <taxon>Craniata</taxon>
        <taxon>Vertebrata</taxon>
        <taxon>Euteleostomi</taxon>
        <taxon>Amphibia</taxon>
        <taxon>Batrachia</taxon>
        <taxon>Anura</taxon>
        <taxon>Neobatrachia</taxon>
        <taxon>Hyloidea</taxon>
        <taxon>Hylidae</taxon>
        <taxon>Phyllomedusinae</taxon>
        <taxon>Pithecopus</taxon>
    </lineage>
</organism>
<sequence>MDILKKSLFLILFLGVVSLSICEEEKRENEEEMEQDDEQSEMKRALWKEVLKNAGKAALNEINNLVQGGQ</sequence>
<comment type="function">
    <text evidence="2">Antimicrobial peptide which inhibits the growth of Gram-negative (MIC=16-64 uM) and Gram-positive bacteria (MIC=32 uM), and pathogenic yeast Candida albicans (MIC=16 uM) (PubMed:31635388). Shows a broad-spectrum of anticancer activities against several cancer cell lines (PubMed:31635388). Also shows slight cytotoxicity on human dermal microvascular endothelium cells (IC(50)=4.85 uM) (PubMed:31635388). Induces low hemolysis against horse erythrocytes (PubMed:31635388).</text>
</comment>
<comment type="subcellular location">
    <subcellularLocation>
        <location evidence="2">Secreted</location>
    </subcellularLocation>
    <subcellularLocation>
        <location evidence="5">Target cell membrane</location>
    </subcellularLocation>
    <text evidence="5">Forms a helical membrane channel in the prey.</text>
</comment>
<comment type="tissue specificity">
    <text evidence="5">Expressed by the skin glands.</text>
</comment>
<comment type="similarity">
    <text evidence="4">Belongs to the frog skin active peptide (FSAP) family.</text>
</comment>